<dbReference type="PIR" id="A01960">
    <property type="entry name" value="KVRBAH"/>
</dbReference>
<dbReference type="FunCoup" id="P01697">
    <property type="interactions" value="277"/>
</dbReference>
<dbReference type="InParanoid" id="P01697"/>
<dbReference type="Proteomes" id="UP000001811">
    <property type="component" value="Unplaced"/>
</dbReference>
<dbReference type="GO" id="GO:0019814">
    <property type="term" value="C:immunoglobulin complex"/>
    <property type="evidence" value="ECO:0007669"/>
    <property type="project" value="UniProtKB-KW"/>
</dbReference>
<dbReference type="GO" id="GO:0002250">
    <property type="term" value="P:adaptive immune response"/>
    <property type="evidence" value="ECO:0007669"/>
    <property type="project" value="UniProtKB-KW"/>
</dbReference>
<dbReference type="FunFam" id="2.60.40.10:FF:000212">
    <property type="entry name" value="Immunoglobulin kappa chain variable 12-38"/>
    <property type="match status" value="1"/>
</dbReference>
<dbReference type="Gene3D" id="2.60.40.10">
    <property type="entry name" value="Immunoglobulins"/>
    <property type="match status" value="1"/>
</dbReference>
<dbReference type="InterPro" id="IPR007110">
    <property type="entry name" value="Ig-like_dom"/>
</dbReference>
<dbReference type="InterPro" id="IPR036179">
    <property type="entry name" value="Ig-like_dom_sf"/>
</dbReference>
<dbReference type="InterPro" id="IPR013783">
    <property type="entry name" value="Ig-like_fold"/>
</dbReference>
<dbReference type="InterPro" id="IPR003599">
    <property type="entry name" value="Ig_sub"/>
</dbReference>
<dbReference type="InterPro" id="IPR013106">
    <property type="entry name" value="Ig_V-set"/>
</dbReference>
<dbReference type="InterPro" id="IPR050150">
    <property type="entry name" value="IgV_Light_Chain"/>
</dbReference>
<dbReference type="PANTHER" id="PTHR23267">
    <property type="entry name" value="IMMUNOGLOBULIN LIGHT CHAIN"/>
    <property type="match status" value="1"/>
</dbReference>
<dbReference type="Pfam" id="PF07686">
    <property type="entry name" value="V-set"/>
    <property type="match status" value="1"/>
</dbReference>
<dbReference type="SMART" id="SM00409">
    <property type="entry name" value="IG"/>
    <property type="match status" value="1"/>
</dbReference>
<dbReference type="SMART" id="SM00406">
    <property type="entry name" value="IGv"/>
    <property type="match status" value="1"/>
</dbReference>
<dbReference type="SUPFAM" id="SSF48726">
    <property type="entry name" value="Immunoglobulin"/>
    <property type="match status" value="1"/>
</dbReference>
<dbReference type="PROSITE" id="PS50835">
    <property type="entry name" value="IG_LIKE"/>
    <property type="match status" value="1"/>
</dbReference>
<organism>
    <name type="scientific">Oryctolagus cuniculus</name>
    <name type="common">Rabbit</name>
    <dbReference type="NCBI Taxonomy" id="9986"/>
    <lineage>
        <taxon>Eukaryota</taxon>
        <taxon>Metazoa</taxon>
        <taxon>Chordata</taxon>
        <taxon>Craniata</taxon>
        <taxon>Vertebrata</taxon>
        <taxon>Euteleostomi</taxon>
        <taxon>Mammalia</taxon>
        <taxon>Eutheria</taxon>
        <taxon>Euarchontoglires</taxon>
        <taxon>Glires</taxon>
        <taxon>Lagomorpha</taxon>
        <taxon>Leporidae</taxon>
        <taxon>Oryctolagus</taxon>
    </lineage>
</organism>
<protein>
    <recommendedName>
        <fullName>Ig kappa chain V region AH80-5</fullName>
    </recommendedName>
</protein>
<accession>P01697</accession>
<proteinExistence type="evidence at protein level"/>
<comment type="miscellaneous">
    <text>This chain was obtained from antibody to type III pneumococci and was isolated from the serum of a single rabbit.</text>
</comment>
<feature type="chain" id="PRO_0000059734" description="Ig kappa chain V region AH80-5">
    <location>
        <begin position="1"/>
        <end position="114" status="greater than"/>
    </location>
</feature>
<feature type="region of interest" description="Framework-1">
    <location>
        <begin position="1"/>
        <end position="22"/>
    </location>
</feature>
<feature type="region of interest" description="Complementarity-determining-1">
    <location>
        <begin position="23"/>
        <end position="35"/>
    </location>
</feature>
<feature type="region of interest" description="Framework-2">
    <location>
        <begin position="36"/>
        <end position="50"/>
    </location>
</feature>
<feature type="region of interest" description="Complementarity-determining-2">
    <location>
        <begin position="51"/>
        <end position="57"/>
    </location>
</feature>
<feature type="region of interest" description="Framework-3">
    <location>
        <begin position="58"/>
        <end position="93"/>
    </location>
</feature>
<feature type="region of interest" description="Complementarity-determining-3">
    <location>
        <begin position="94"/>
        <end position="103"/>
    </location>
</feature>
<feature type="region of interest" description="Framework-4">
    <location>
        <begin position="104"/>
        <end position="113"/>
    </location>
</feature>
<feature type="non-terminal residue">
    <location>
        <position position="114"/>
    </location>
</feature>
<sequence>IVMTQTPSSKSVPVGDTVTINCQAAQSVYSNNRLSWFQQKPGQPPKGLIYYASTLASGVQQDPSRFKGSGSGTQFTLTISDVQCBBAATVYYCQGYKSSDTRAFGGGTEVVVKG</sequence>
<name>KV16_RABIT</name>
<keyword id="KW-1064">Adaptive immunity</keyword>
<keyword id="KW-0903">Direct protein sequencing</keyword>
<keyword id="KW-0391">Immunity</keyword>
<keyword id="KW-1280">Immunoglobulin</keyword>
<keyword id="KW-1185">Reference proteome</keyword>
<reference key="1">
    <citation type="journal article" date="1979" name="Mol. Immunol.">
        <title>The amino acid sequence of a variable region of rabbit b4 chain from an anti-SIII antibody: comparison with light chains of the same sub-group from anti-A-variant carbohydrate antibodies.</title>
        <authorList>
            <person name="Chersi A."/>
            <person name="Appella E."/>
            <person name="Carta S."/>
            <person name="Mage R.G."/>
        </authorList>
    </citation>
    <scope>PROTEIN SEQUENCE</scope>
</reference>